<gene>
    <name evidence="1" type="primary">srp19</name>
    <name type="ordered locus">VNG_1367G</name>
</gene>
<organism>
    <name type="scientific">Halobacterium salinarum (strain ATCC 700922 / JCM 11081 / NRC-1)</name>
    <name type="common">Halobacterium halobium</name>
    <dbReference type="NCBI Taxonomy" id="64091"/>
    <lineage>
        <taxon>Archaea</taxon>
        <taxon>Methanobacteriati</taxon>
        <taxon>Methanobacteriota</taxon>
        <taxon>Stenosarchaea group</taxon>
        <taxon>Halobacteria</taxon>
        <taxon>Halobacteriales</taxon>
        <taxon>Halobacteriaceae</taxon>
        <taxon>Halobacterium</taxon>
        <taxon>Halobacterium salinarum NRC-34001</taxon>
    </lineage>
</organism>
<protein>
    <recommendedName>
        <fullName evidence="1">Signal recognition particle 19 kDa protein</fullName>
        <shortName evidence="1">SRP19</shortName>
    </recommendedName>
</protein>
<evidence type="ECO:0000255" key="1">
    <source>
        <dbReference type="HAMAP-Rule" id="MF_00305"/>
    </source>
</evidence>
<accession>Q9HQ21</accession>
<feature type="chain" id="PRO_0000135215" description="Signal recognition particle 19 kDa protein">
    <location>
        <begin position="1"/>
        <end position="92"/>
    </location>
</feature>
<dbReference type="EMBL" id="AE004437">
    <property type="protein sequence ID" value="AAG19696.1"/>
    <property type="molecule type" value="Genomic_DNA"/>
</dbReference>
<dbReference type="PIR" id="D84291">
    <property type="entry name" value="D84291"/>
</dbReference>
<dbReference type="RefSeq" id="WP_010902992.1">
    <property type="nucleotide sequence ID" value="NC_002607.1"/>
</dbReference>
<dbReference type="SMR" id="Q9HQ21"/>
<dbReference type="FunCoup" id="Q9HQ21">
    <property type="interactions" value="50"/>
</dbReference>
<dbReference type="STRING" id="64091.VNG_1367G"/>
<dbReference type="PaxDb" id="64091-VNG_1367G"/>
<dbReference type="GeneID" id="68694101"/>
<dbReference type="KEGG" id="hal:VNG_1367G"/>
<dbReference type="PATRIC" id="fig|64091.14.peg.1044"/>
<dbReference type="HOGENOM" id="CLU_169299_1_0_2"/>
<dbReference type="InParanoid" id="Q9HQ21"/>
<dbReference type="OrthoDB" id="56356at2157"/>
<dbReference type="PhylomeDB" id="Q9HQ21"/>
<dbReference type="Proteomes" id="UP000000554">
    <property type="component" value="Chromosome"/>
</dbReference>
<dbReference type="GO" id="GO:0048500">
    <property type="term" value="C:signal recognition particle"/>
    <property type="evidence" value="ECO:0007669"/>
    <property type="project" value="UniProtKB-UniRule"/>
</dbReference>
<dbReference type="GO" id="GO:0008312">
    <property type="term" value="F:7S RNA binding"/>
    <property type="evidence" value="ECO:0000318"/>
    <property type="project" value="GO_Central"/>
</dbReference>
<dbReference type="GO" id="GO:0006617">
    <property type="term" value="P:SRP-dependent cotranslational protein targeting to membrane, signal sequence recognition"/>
    <property type="evidence" value="ECO:0000318"/>
    <property type="project" value="GO_Central"/>
</dbReference>
<dbReference type="Gene3D" id="3.30.56.30">
    <property type="entry name" value="Signal recognition particle, SRP19-like subunit"/>
    <property type="match status" value="1"/>
</dbReference>
<dbReference type="HAMAP" id="MF_00305">
    <property type="entry name" value="SRP19"/>
    <property type="match status" value="1"/>
</dbReference>
<dbReference type="InterPro" id="IPR002778">
    <property type="entry name" value="Signal_recog_particle_SRP19"/>
</dbReference>
<dbReference type="InterPro" id="IPR053394">
    <property type="entry name" value="SRP19"/>
</dbReference>
<dbReference type="InterPro" id="IPR036521">
    <property type="entry name" value="SRP19-like_sf"/>
</dbReference>
<dbReference type="InterPro" id="IPR022938">
    <property type="entry name" value="SRP19_arc-type"/>
</dbReference>
<dbReference type="NCBIfam" id="NF041311">
    <property type="entry name" value="Sig_rec_Srp19_Halo"/>
    <property type="match status" value="1"/>
</dbReference>
<dbReference type="PANTHER" id="PTHR17453">
    <property type="entry name" value="SIGNAL RECOGNITION PARTICLE 19 KD PROTEIN"/>
    <property type="match status" value="1"/>
</dbReference>
<dbReference type="PANTHER" id="PTHR17453:SF0">
    <property type="entry name" value="SIGNAL RECOGNITION PARTICLE 19 KDA PROTEIN"/>
    <property type="match status" value="1"/>
</dbReference>
<dbReference type="Pfam" id="PF01922">
    <property type="entry name" value="SRP19"/>
    <property type="match status" value="1"/>
</dbReference>
<dbReference type="SUPFAM" id="SSF69695">
    <property type="entry name" value="SRP19"/>
    <property type="match status" value="1"/>
</dbReference>
<name>SRP19_HALSA</name>
<sequence>MVENVIWPAYFDAALSRRDGRRVPMELAVEEPSIDEIATAVQQVGYDAVVERDVAYPRRHWDAAGRVLVKDADDAKNTLVQAVAAYVGALRD</sequence>
<reference key="1">
    <citation type="journal article" date="2000" name="Proc. Natl. Acad. Sci. U.S.A.">
        <title>Genome sequence of Halobacterium species NRC-1.</title>
        <authorList>
            <person name="Ng W.V."/>
            <person name="Kennedy S.P."/>
            <person name="Mahairas G.G."/>
            <person name="Berquist B."/>
            <person name="Pan M."/>
            <person name="Shukla H.D."/>
            <person name="Lasky S.R."/>
            <person name="Baliga N.S."/>
            <person name="Thorsson V."/>
            <person name="Sbrogna J."/>
            <person name="Swartzell S."/>
            <person name="Weir D."/>
            <person name="Hall J."/>
            <person name="Dahl T.A."/>
            <person name="Welti R."/>
            <person name="Goo Y.A."/>
            <person name="Leithauser B."/>
            <person name="Keller K."/>
            <person name="Cruz R."/>
            <person name="Danson M.J."/>
            <person name="Hough D.W."/>
            <person name="Maddocks D.G."/>
            <person name="Jablonski P.E."/>
            <person name="Krebs M.P."/>
            <person name="Angevine C.M."/>
            <person name="Dale H."/>
            <person name="Isenbarger T.A."/>
            <person name="Peck R.F."/>
            <person name="Pohlschroder M."/>
            <person name="Spudich J.L."/>
            <person name="Jung K.-H."/>
            <person name="Alam M."/>
            <person name="Freitas T."/>
            <person name="Hou S."/>
            <person name="Daniels C.J."/>
            <person name="Dennis P.P."/>
            <person name="Omer A.D."/>
            <person name="Ebhardt H."/>
            <person name="Lowe T.M."/>
            <person name="Liang P."/>
            <person name="Riley M."/>
            <person name="Hood L."/>
            <person name="DasSarma S."/>
        </authorList>
    </citation>
    <scope>NUCLEOTIDE SEQUENCE [LARGE SCALE GENOMIC DNA]</scope>
    <source>
        <strain>ATCC 700922 / JCM 11081 / NRC-1</strain>
    </source>
</reference>
<keyword id="KW-0963">Cytoplasm</keyword>
<keyword id="KW-1185">Reference proteome</keyword>
<keyword id="KW-0687">Ribonucleoprotein</keyword>
<keyword id="KW-0694">RNA-binding</keyword>
<keyword id="KW-0733">Signal recognition particle</keyword>
<proteinExistence type="inferred from homology"/>
<comment type="function">
    <text evidence="1">Involved in targeting and insertion of nascent membrane proteins into the cytoplasmic membrane. Binds directly to 7S RNA and mediates binding of the 54 kDa subunit of the SRP.</text>
</comment>
<comment type="subunit">
    <text evidence="1">Part of the signal recognition particle protein translocation system, which is composed of SRP and FtsY. Archaeal SRP consists of a 7S RNA molecule of 300 nucleotides and two protein subunits: SRP54 and SRP19.</text>
</comment>
<comment type="subcellular location">
    <subcellularLocation>
        <location evidence="1">Cytoplasm</location>
    </subcellularLocation>
</comment>
<comment type="similarity">
    <text evidence="1">Belongs to the SRP19 family.</text>
</comment>